<name>LSRG_YERPS</name>
<keyword id="KW-0963">Cytoplasm</keyword>
<keyword id="KW-0413">Isomerase</keyword>
<feature type="chain" id="PRO_0000351582" description="(4S)-4-hydroxy-5-phosphonooxypentane-2,3-dione isomerase">
    <location>
        <begin position="1"/>
        <end position="96"/>
    </location>
</feature>
<feature type="domain" description="ABM" evidence="1">
    <location>
        <begin position="2"/>
        <end position="91"/>
    </location>
</feature>
<protein>
    <recommendedName>
        <fullName evidence="1">(4S)-4-hydroxy-5-phosphonooxypentane-2,3-dione isomerase</fullName>
        <ecNumber evidence="1">5.3.1.32</ecNumber>
    </recommendedName>
    <alternativeName>
        <fullName evidence="1">Autoinducer 2-degrading protein LsrG</fullName>
        <shortName evidence="1">AI-2-degrading protein LsrG</shortName>
    </alternativeName>
    <alternativeName>
        <fullName evidence="1">Phospho-(S)-4,5-dihydroxy-2,3-pentanedione isomerase</fullName>
    </alternativeName>
    <alternativeName>
        <fullName evidence="1">Phospho-AI-2 isomerase</fullName>
    </alternativeName>
</protein>
<organism>
    <name type="scientific">Yersinia pseudotuberculosis serotype I (strain IP32953)</name>
    <dbReference type="NCBI Taxonomy" id="273123"/>
    <lineage>
        <taxon>Bacteria</taxon>
        <taxon>Pseudomonadati</taxon>
        <taxon>Pseudomonadota</taxon>
        <taxon>Gammaproteobacteria</taxon>
        <taxon>Enterobacterales</taxon>
        <taxon>Yersiniaceae</taxon>
        <taxon>Yersinia</taxon>
    </lineage>
</organism>
<proteinExistence type="inferred from homology"/>
<reference key="1">
    <citation type="journal article" date="2004" name="Proc. Natl. Acad. Sci. U.S.A.">
        <title>Insights into the evolution of Yersinia pestis through whole-genome comparison with Yersinia pseudotuberculosis.</title>
        <authorList>
            <person name="Chain P.S.G."/>
            <person name="Carniel E."/>
            <person name="Larimer F.W."/>
            <person name="Lamerdin J."/>
            <person name="Stoutland P.O."/>
            <person name="Regala W.M."/>
            <person name="Georgescu A.M."/>
            <person name="Vergez L.M."/>
            <person name="Land M.L."/>
            <person name="Motin V.L."/>
            <person name="Brubaker R.R."/>
            <person name="Fowler J."/>
            <person name="Hinnebusch J."/>
            <person name="Marceau M."/>
            <person name="Medigue C."/>
            <person name="Simonet M."/>
            <person name="Chenal-Francisque V."/>
            <person name="Souza B."/>
            <person name="Dacheux D."/>
            <person name="Elliott J.M."/>
            <person name="Derbise A."/>
            <person name="Hauser L.J."/>
            <person name="Garcia E."/>
        </authorList>
    </citation>
    <scope>NUCLEOTIDE SEQUENCE [LARGE SCALE GENOMIC DNA]</scope>
    <source>
        <strain>IP32953</strain>
    </source>
</reference>
<comment type="function">
    <text evidence="1">Involved in the degradation of phospho-AI-2, thereby terminating induction of the lsr operon and closing the AI-2 signaling cycle. Catalyzes the conversion of (4S)-4-hydroxy-5-phosphonooxypentane-2,3-dione (P-DPD) to 3-hydroxy-5-phosphonooxypentane-2,4-dione (P-HPD).</text>
</comment>
<comment type="catalytic activity">
    <reaction evidence="1">
        <text>(2S)-2-hydroxy-3,4-dioxopentyl phosphate = 3-hydroxy-2,4-dioxopentyl phosphate</text>
        <dbReference type="Rhea" id="RHEA:44360"/>
        <dbReference type="ChEBI" id="CHEBI:71677"/>
        <dbReference type="ChEBI" id="CHEBI:84359"/>
        <dbReference type="EC" id="5.3.1.32"/>
    </reaction>
</comment>
<comment type="subunit">
    <text evidence="1">Homodimer.</text>
</comment>
<comment type="subcellular location">
    <subcellularLocation>
        <location evidence="1">Cytoplasm</location>
    </subcellularLocation>
</comment>
<comment type="similarity">
    <text evidence="1">Belongs to the LsrG family.</text>
</comment>
<gene>
    <name evidence="1" type="primary">lsrG</name>
    <name type="ordered locus">YPTB0547</name>
</gene>
<accession>Q66EZ4</accession>
<evidence type="ECO:0000255" key="1">
    <source>
        <dbReference type="HAMAP-Rule" id="MF_02051"/>
    </source>
</evidence>
<sequence length="96" mass="11098">MHVTLVEINVKEDKVDQFIEVFRANHLGSIREAGNLRFDVLRDEHIPTRFYIYEAYTDEAAVAIHKTTPHYLQCVEQLAPLMTGPRKKTVFIGLMP</sequence>
<dbReference type="EC" id="5.3.1.32" evidence="1"/>
<dbReference type="EMBL" id="BX936398">
    <property type="protein sequence ID" value="CAH19787.1"/>
    <property type="molecule type" value="Genomic_DNA"/>
</dbReference>
<dbReference type="RefSeq" id="WP_002209186.1">
    <property type="nucleotide sequence ID" value="NZ_CP009712.1"/>
</dbReference>
<dbReference type="SMR" id="Q66EZ4"/>
<dbReference type="GeneID" id="96664050"/>
<dbReference type="KEGG" id="ypo:BZ17_2012"/>
<dbReference type="KEGG" id="yps:YPTB0547"/>
<dbReference type="PATRIC" id="fig|273123.14.peg.2138"/>
<dbReference type="Proteomes" id="UP000001011">
    <property type="component" value="Chromosome"/>
</dbReference>
<dbReference type="GO" id="GO:0005829">
    <property type="term" value="C:cytosol"/>
    <property type="evidence" value="ECO:0007669"/>
    <property type="project" value="TreeGrafter"/>
</dbReference>
<dbReference type="GO" id="GO:0002952">
    <property type="term" value="F:(4S)-4-hydroxy-5-phosphonooxypentane-2,3-dione isomerase activity"/>
    <property type="evidence" value="ECO:0007669"/>
    <property type="project" value="UniProtKB-EC"/>
</dbReference>
<dbReference type="GO" id="GO:0016491">
    <property type="term" value="F:oxidoreductase activity"/>
    <property type="evidence" value="ECO:0007669"/>
    <property type="project" value="TreeGrafter"/>
</dbReference>
<dbReference type="FunFam" id="3.30.70.100:FF:000016">
    <property type="entry name" value="(4S)-4-hydroxy-5-phosphonooxypentane-2,3-dione isomerase"/>
    <property type="match status" value="1"/>
</dbReference>
<dbReference type="Gene3D" id="3.30.70.100">
    <property type="match status" value="1"/>
</dbReference>
<dbReference type="HAMAP" id="MF_02051">
    <property type="entry name" value="LsrG"/>
    <property type="match status" value="1"/>
</dbReference>
<dbReference type="InterPro" id="IPR007138">
    <property type="entry name" value="ABM_dom"/>
</dbReference>
<dbReference type="InterPro" id="IPR050744">
    <property type="entry name" value="AI-2_Isomerase_LsrG"/>
</dbReference>
<dbReference type="InterPro" id="IPR011008">
    <property type="entry name" value="Dimeric_a/b-barrel"/>
</dbReference>
<dbReference type="InterPro" id="IPR033672">
    <property type="entry name" value="LsrG"/>
</dbReference>
<dbReference type="NCBIfam" id="NF007791">
    <property type="entry name" value="PRK10486.1"/>
    <property type="match status" value="1"/>
</dbReference>
<dbReference type="PANTHER" id="PTHR33336:SF1">
    <property type="entry name" value="(4S)-4-HYDROXY-5-PHOSPHONOOXYPENTANE-2,3-DIONE ISOMERASE"/>
    <property type="match status" value="1"/>
</dbReference>
<dbReference type="PANTHER" id="PTHR33336">
    <property type="entry name" value="QUINOL MONOOXYGENASE YGIN-RELATED"/>
    <property type="match status" value="1"/>
</dbReference>
<dbReference type="Pfam" id="PF03992">
    <property type="entry name" value="ABM"/>
    <property type="match status" value="1"/>
</dbReference>
<dbReference type="SUPFAM" id="SSF54909">
    <property type="entry name" value="Dimeric alpha+beta barrel"/>
    <property type="match status" value="1"/>
</dbReference>
<dbReference type="PROSITE" id="PS51725">
    <property type="entry name" value="ABM"/>
    <property type="match status" value="1"/>
</dbReference>